<proteinExistence type="inferred from homology"/>
<gene>
    <name type="ordered locus">DP2957</name>
</gene>
<evidence type="ECO:0000255" key="1">
    <source>
        <dbReference type="HAMAP-Rule" id="MF_00226"/>
    </source>
</evidence>
<sequence>MDIEIIAIGDELTSGRILNTTSSFAAKQLFEAGYEIYGMSTIGDTPEVIGEALKRSIERVDAVLVTGGLGSTDDDLTNEAVSRAFGLPTLPNLEILSIVRAHFAQITDAPVGQLEKLAWLPEGAEVFDPQSGMAGYQLIYEDKPIFFLPGVPHQMKALMVEHVLPRLATWHTHRHVSTFQRVFRIFNLPENEVNTRVSRLKLTNDVHIGYYPVFPEVHLSLLIRDTNPKTAKRLFDSSCRAIKTALGDHIYGYDRDTMSQIVGQALVKRGMTLAVAESCTGGLIAQKLTDMPGSSRYFLGGVTSYHNSMKTAFLDVPERLIEKEGAVSPEVAEAMAYGILEKTGADVTLSVTGIAGPGGGTLEKPVGTVYIAASTPHGDWVNAFQFKGSREQIRELSAQHSLDILRRYLLQDI</sequence>
<reference key="1">
    <citation type="journal article" date="2004" name="Environ. Microbiol.">
        <title>The genome of Desulfotalea psychrophila, a sulfate-reducing bacterium from permanently cold Arctic sediments.</title>
        <authorList>
            <person name="Rabus R."/>
            <person name="Ruepp A."/>
            <person name="Frickey T."/>
            <person name="Rattei T."/>
            <person name="Fartmann B."/>
            <person name="Stark M."/>
            <person name="Bauer M."/>
            <person name="Zibat A."/>
            <person name="Lombardot T."/>
            <person name="Becker I."/>
            <person name="Amann J."/>
            <person name="Gellner K."/>
            <person name="Teeling H."/>
            <person name="Leuschner W.D."/>
            <person name="Gloeckner F.-O."/>
            <person name="Lupas A.N."/>
            <person name="Amann R."/>
            <person name="Klenk H.-P."/>
        </authorList>
    </citation>
    <scope>NUCLEOTIDE SEQUENCE [LARGE SCALE GENOMIC DNA]</scope>
    <source>
        <strain>DSM 12343 / LSv54</strain>
    </source>
</reference>
<organism>
    <name type="scientific">Desulfotalea psychrophila (strain LSv54 / DSM 12343)</name>
    <dbReference type="NCBI Taxonomy" id="177439"/>
    <lineage>
        <taxon>Bacteria</taxon>
        <taxon>Pseudomonadati</taxon>
        <taxon>Thermodesulfobacteriota</taxon>
        <taxon>Desulfobulbia</taxon>
        <taxon>Desulfobulbales</taxon>
        <taxon>Desulfocapsaceae</taxon>
        <taxon>Desulfotalea</taxon>
    </lineage>
</organism>
<protein>
    <recommendedName>
        <fullName evidence="1">CinA-like protein</fullName>
    </recommendedName>
</protein>
<comment type="similarity">
    <text evidence="1">Belongs to the CinA family.</text>
</comment>
<feature type="chain" id="PRO_1000058706" description="CinA-like protein">
    <location>
        <begin position="1"/>
        <end position="413"/>
    </location>
</feature>
<name>CINAL_DESPS</name>
<keyword id="KW-1185">Reference proteome</keyword>
<dbReference type="EMBL" id="CR522870">
    <property type="protein sequence ID" value="CAG37686.1"/>
    <property type="molecule type" value="Genomic_DNA"/>
</dbReference>
<dbReference type="RefSeq" id="WP_011190198.1">
    <property type="nucleotide sequence ID" value="NC_006138.1"/>
</dbReference>
<dbReference type="SMR" id="Q6AIZ4"/>
<dbReference type="STRING" id="177439.DP2957"/>
<dbReference type="KEGG" id="dps:DP2957"/>
<dbReference type="eggNOG" id="COG1058">
    <property type="taxonomic scope" value="Bacteria"/>
</dbReference>
<dbReference type="eggNOG" id="COG1546">
    <property type="taxonomic scope" value="Bacteria"/>
</dbReference>
<dbReference type="HOGENOM" id="CLU_030805_9_3_7"/>
<dbReference type="OrthoDB" id="9801454at2"/>
<dbReference type="Proteomes" id="UP000000602">
    <property type="component" value="Chromosome"/>
</dbReference>
<dbReference type="CDD" id="cd00885">
    <property type="entry name" value="cinA"/>
    <property type="match status" value="1"/>
</dbReference>
<dbReference type="Gene3D" id="3.30.70.2860">
    <property type="match status" value="1"/>
</dbReference>
<dbReference type="Gene3D" id="3.90.950.20">
    <property type="entry name" value="CinA-like"/>
    <property type="match status" value="1"/>
</dbReference>
<dbReference type="Gene3D" id="3.40.980.10">
    <property type="entry name" value="MoaB/Mog-like domain"/>
    <property type="match status" value="1"/>
</dbReference>
<dbReference type="HAMAP" id="MF_00226_B">
    <property type="entry name" value="CinA_B"/>
    <property type="match status" value="1"/>
</dbReference>
<dbReference type="InterPro" id="IPR050101">
    <property type="entry name" value="CinA"/>
</dbReference>
<dbReference type="InterPro" id="IPR036653">
    <property type="entry name" value="CinA-like_C"/>
</dbReference>
<dbReference type="InterPro" id="IPR008136">
    <property type="entry name" value="CinA_C"/>
</dbReference>
<dbReference type="InterPro" id="IPR041424">
    <property type="entry name" value="CinA_KH"/>
</dbReference>
<dbReference type="InterPro" id="IPR008135">
    <property type="entry name" value="Competence-induced_CinA"/>
</dbReference>
<dbReference type="InterPro" id="IPR036425">
    <property type="entry name" value="MoaB/Mog-like_dom_sf"/>
</dbReference>
<dbReference type="InterPro" id="IPR001453">
    <property type="entry name" value="MoaB/Mog_dom"/>
</dbReference>
<dbReference type="NCBIfam" id="TIGR00200">
    <property type="entry name" value="cinA_nterm"/>
    <property type="match status" value="1"/>
</dbReference>
<dbReference type="NCBIfam" id="TIGR00199">
    <property type="entry name" value="PncC_domain"/>
    <property type="match status" value="1"/>
</dbReference>
<dbReference type="PANTHER" id="PTHR13939">
    <property type="entry name" value="NICOTINAMIDE-NUCLEOTIDE AMIDOHYDROLASE PNCC"/>
    <property type="match status" value="1"/>
</dbReference>
<dbReference type="PANTHER" id="PTHR13939:SF0">
    <property type="entry name" value="NMN AMIDOHYDROLASE-LIKE PROTEIN YFAY"/>
    <property type="match status" value="1"/>
</dbReference>
<dbReference type="Pfam" id="PF02464">
    <property type="entry name" value="CinA"/>
    <property type="match status" value="1"/>
</dbReference>
<dbReference type="Pfam" id="PF18146">
    <property type="entry name" value="CinA_KH"/>
    <property type="match status" value="1"/>
</dbReference>
<dbReference type="Pfam" id="PF00994">
    <property type="entry name" value="MoCF_biosynth"/>
    <property type="match status" value="1"/>
</dbReference>
<dbReference type="PIRSF" id="PIRSF006728">
    <property type="entry name" value="CinA"/>
    <property type="match status" value="1"/>
</dbReference>
<dbReference type="SMART" id="SM00852">
    <property type="entry name" value="MoCF_biosynth"/>
    <property type="match status" value="1"/>
</dbReference>
<dbReference type="SUPFAM" id="SSF142433">
    <property type="entry name" value="CinA-like"/>
    <property type="match status" value="1"/>
</dbReference>
<dbReference type="SUPFAM" id="SSF53218">
    <property type="entry name" value="Molybdenum cofactor biosynthesis proteins"/>
    <property type="match status" value="1"/>
</dbReference>
<accession>Q6AIZ4</accession>